<protein>
    <recommendedName>
        <fullName evidence="1">UPF0178 protein Bcen2424_1660</fullName>
    </recommendedName>
</protein>
<dbReference type="EMBL" id="CP000458">
    <property type="protein sequence ID" value="ABK08412.1"/>
    <property type="molecule type" value="Genomic_DNA"/>
</dbReference>
<dbReference type="RefSeq" id="WP_011545395.1">
    <property type="nucleotide sequence ID" value="NC_008542.1"/>
</dbReference>
<dbReference type="KEGG" id="bch:Bcen2424_1660"/>
<dbReference type="HOGENOM" id="CLU_106619_2_1_4"/>
<dbReference type="CDD" id="cd18720">
    <property type="entry name" value="PIN_YqxD-like"/>
    <property type="match status" value="1"/>
</dbReference>
<dbReference type="HAMAP" id="MF_00489">
    <property type="entry name" value="UPF0178"/>
    <property type="match status" value="1"/>
</dbReference>
<dbReference type="InterPro" id="IPR003791">
    <property type="entry name" value="UPF0178"/>
</dbReference>
<dbReference type="NCBIfam" id="NF001095">
    <property type="entry name" value="PRK00124.1"/>
    <property type="match status" value="1"/>
</dbReference>
<dbReference type="PANTHER" id="PTHR35146">
    <property type="entry name" value="UPF0178 PROTEIN YAII"/>
    <property type="match status" value="1"/>
</dbReference>
<dbReference type="PANTHER" id="PTHR35146:SF1">
    <property type="entry name" value="UPF0178 PROTEIN YAII"/>
    <property type="match status" value="1"/>
</dbReference>
<dbReference type="Pfam" id="PF02639">
    <property type="entry name" value="DUF188"/>
    <property type="match status" value="1"/>
</dbReference>
<feature type="chain" id="PRO_1000014412" description="UPF0178 protein Bcen2424_1660">
    <location>
        <begin position="1"/>
        <end position="150"/>
    </location>
</feature>
<comment type="similarity">
    <text evidence="1">Belongs to the UPF0178 family.</text>
</comment>
<organism>
    <name type="scientific">Burkholderia cenocepacia (strain HI2424)</name>
    <dbReference type="NCBI Taxonomy" id="331272"/>
    <lineage>
        <taxon>Bacteria</taxon>
        <taxon>Pseudomonadati</taxon>
        <taxon>Pseudomonadota</taxon>
        <taxon>Betaproteobacteria</taxon>
        <taxon>Burkholderiales</taxon>
        <taxon>Burkholderiaceae</taxon>
        <taxon>Burkholderia</taxon>
        <taxon>Burkholderia cepacia complex</taxon>
    </lineage>
</organism>
<accession>A0K7D5</accession>
<reference key="1">
    <citation type="submission" date="2006-08" db="EMBL/GenBank/DDBJ databases">
        <title>Complete sequence of chromosome 1 of Burkholderia cenocepacia HI2424.</title>
        <authorList>
            <person name="Copeland A."/>
            <person name="Lucas S."/>
            <person name="Lapidus A."/>
            <person name="Barry K."/>
            <person name="Detter J.C."/>
            <person name="Glavina del Rio T."/>
            <person name="Hammon N."/>
            <person name="Israni S."/>
            <person name="Pitluck S."/>
            <person name="Chain P."/>
            <person name="Malfatti S."/>
            <person name="Shin M."/>
            <person name="Vergez L."/>
            <person name="Schmutz J."/>
            <person name="Larimer F."/>
            <person name="Land M."/>
            <person name="Hauser L."/>
            <person name="Kyrpides N."/>
            <person name="Kim E."/>
            <person name="LiPuma J.J."/>
            <person name="Gonzalez C.F."/>
            <person name="Konstantinidis K."/>
            <person name="Tiedje J.M."/>
            <person name="Richardson P."/>
        </authorList>
    </citation>
    <scope>NUCLEOTIDE SEQUENCE [LARGE SCALE GENOMIC DNA]</scope>
    <source>
        <strain>HI2424</strain>
    </source>
</reference>
<sequence length="150" mass="16238">MQVLVDADACPAVIKDMLFRAARRAEICVTLVANQFLRTPPSPFIKAVQVPAGFDVADARIVELAEPGDLVITADIPLAAAVLDKGAHALDPRGNWFSRENIEERLSTRAMMDQLRSAGIDTGGPAPFSARDGKTFASQLDRFLARHAPR</sequence>
<gene>
    <name type="ordered locus">Bcen2424_1660</name>
</gene>
<proteinExistence type="inferred from homology"/>
<evidence type="ECO:0000255" key="1">
    <source>
        <dbReference type="HAMAP-Rule" id="MF_00489"/>
    </source>
</evidence>
<name>Y1660_BURCH</name>